<reference key="1">
    <citation type="journal article" date="2002" name="Nature">
        <title>The genome sequence of Schizosaccharomyces pombe.</title>
        <authorList>
            <person name="Wood V."/>
            <person name="Gwilliam R."/>
            <person name="Rajandream M.A."/>
            <person name="Lyne M.H."/>
            <person name="Lyne R."/>
            <person name="Stewart A."/>
            <person name="Sgouros J.G."/>
            <person name="Peat N."/>
            <person name="Hayles J."/>
            <person name="Baker S.G."/>
            <person name="Basham D."/>
            <person name="Bowman S."/>
            <person name="Brooks K."/>
            <person name="Brown D."/>
            <person name="Brown S."/>
            <person name="Chillingworth T."/>
            <person name="Churcher C.M."/>
            <person name="Collins M."/>
            <person name="Connor R."/>
            <person name="Cronin A."/>
            <person name="Davis P."/>
            <person name="Feltwell T."/>
            <person name="Fraser A."/>
            <person name="Gentles S."/>
            <person name="Goble A."/>
            <person name="Hamlin N."/>
            <person name="Harris D.E."/>
            <person name="Hidalgo J."/>
            <person name="Hodgson G."/>
            <person name="Holroyd S."/>
            <person name="Hornsby T."/>
            <person name="Howarth S."/>
            <person name="Huckle E.J."/>
            <person name="Hunt S."/>
            <person name="Jagels K."/>
            <person name="James K.D."/>
            <person name="Jones L."/>
            <person name="Jones M."/>
            <person name="Leather S."/>
            <person name="McDonald S."/>
            <person name="McLean J."/>
            <person name="Mooney P."/>
            <person name="Moule S."/>
            <person name="Mungall K.L."/>
            <person name="Murphy L.D."/>
            <person name="Niblett D."/>
            <person name="Odell C."/>
            <person name="Oliver K."/>
            <person name="O'Neil S."/>
            <person name="Pearson D."/>
            <person name="Quail M.A."/>
            <person name="Rabbinowitsch E."/>
            <person name="Rutherford K.M."/>
            <person name="Rutter S."/>
            <person name="Saunders D."/>
            <person name="Seeger K."/>
            <person name="Sharp S."/>
            <person name="Skelton J."/>
            <person name="Simmonds M.N."/>
            <person name="Squares R."/>
            <person name="Squares S."/>
            <person name="Stevens K."/>
            <person name="Taylor K."/>
            <person name="Taylor R.G."/>
            <person name="Tivey A."/>
            <person name="Walsh S.V."/>
            <person name="Warren T."/>
            <person name="Whitehead S."/>
            <person name="Woodward J.R."/>
            <person name="Volckaert G."/>
            <person name="Aert R."/>
            <person name="Robben J."/>
            <person name="Grymonprez B."/>
            <person name="Weltjens I."/>
            <person name="Vanstreels E."/>
            <person name="Rieger M."/>
            <person name="Schaefer M."/>
            <person name="Mueller-Auer S."/>
            <person name="Gabel C."/>
            <person name="Fuchs M."/>
            <person name="Duesterhoeft A."/>
            <person name="Fritzc C."/>
            <person name="Holzer E."/>
            <person name="Moestl D."/>
            <person name="Hilbert H."/>
            <person name="Borzym K."/>
            <person name="Langer I."/>
            <person name="Beck A."/>
            <person name="Lehrach H."/>
            <person name="Reinhardt R."/>
            <person name="Pohl T.M."/>
            <person name="Eger P."/>
            <person name="Zimmermann W."/>
            <person name="Wedler H."/>
            <person name="Wambutt R."/>
            <person name="Purnelle B."/>
            <person name="Goffeau A."/>
            <person name="Cadieu E."/>
            <person name="Dreano S."/>
            <person name="Gloux S."/>
            <person name="Lelaure V."/>
            <person name="Mottier S."/>
            <person name="Galibert F."/>
            <person name="Aves S.J."/>
            <person name="Xiang Z."/>
            <person name="Hunt C."/>
            <person name="Moore K."/>
            <person name="Hurst S.M."/>
            <person name="Lucas M."/>
            <person name="Rochet M."/>
            <person name="Gaillardin C."/>
            <person name="Tallada V.A."/>
            <person name="Garzon A."/>
            <person name="Thode G."/>
            <person name="Daga R.R."/>
            <person name="Cruzado L."/>
            <person name="Jimenez J."/>
            <person name="Sanchez M."/>
            <person name="del Rey F."/>
            <person name="Benito J."/>
            <person name="Dominguez A."/>
            <person name="Revuelta J.L."/>
            <person name="Moreno S."/>
            <person name="Armstrong J."/>
            <person name="Forsburg S.L."/>
            <person name="Cerutti L."/>
            <person name="Lowe T."/>
            <person name="McCombie W.R."/>
            <person name="Paulsen I."/>
            <person name="Potashkin J."/>
            <person name="Shpakovski G.V."/>
            <person name="Ussery D."/>
            <person name="Barrell B.G."/>
            <person name="Nurse P."/>
        </authorList>
    </citation>
    <scope>NUCLEOTIDE SEQUENCE [LARGE SCALE GENOMIC DNA]</scope>
    <source>
        <strain>972 / ATCC 24843</strain>
    </source>
</reference>
<reference key="2">
    <citation type="journal article" date="2011" name="Science">
        <title>Comparative functional genomics of the fission yeasts.</title>
        <authorList>
            <person name="Rhind N."/>
            <person name="Chen Z."/>
            <person name="Yassour M."/>
            <person name="Thompson D.A."/>
            <person name="Haas B.J."/>
            <person name="Habib N."/>
            <person name="Wapinski I."/>
            <person name="Roy S."/>
            <person name="Lin M.F."/>
            <person name="Heiman D.I."/>
            <person name="Young S.K."/>
            <person name="Furuya K."/>
            <person name="Guo Y."/>
            <person name="Pidoux A."/>
            <person name="Chen H.M."/>
            <person name="Robbertse B."/>
            <person name="Goldberg J.M."/>
            <person name="Aoki K."/>
            <person name="Bayne E.H."/>
            <person name="Berlin A.M."/>
            <person name="Desjardins C.A."/>
            <person name="Dobbs E."/>
            <person name="Dukaj L."/>
            <person name="Fan L."/>
            <person name="FitzGerald M.G."/>
            <person name="French C."/>
            <person name="Gujja S."/>
            <person name="Hansen K."/>
            <person name="Keifenheim D."/>
            <person name="Levin J.Z."/>
            <person name="Mosher R.A."/>
            <person name="Mueller C.A."/>
            <person name="Pfiffner J."/>
            <person name="Priest M."/>
            <person name="Russ C."/>
            <person name="Smialowska A."/>
            <person name="Swoboda P."/>
            <person name="Sykes S.M."/>
            <person name="Vaughn M."/>
            <person name="Vengrova S."/>
            <person name="Yoder R."/>
            <person name="Zeng Q."/>
            <person name="Allshire R."/>
            <person name="Baulcombe D."/>
            <person name="Birren B.W."/>
            <person name="Brown W."/>
            <person name="Ekwall K."/>
            <person name="Kellis M."/>
            <person name="Leatherwood J."/>
            <person name="Levin H."/>
            <person name="Margalit H."/>
            <person name="Martienssen R."/>
            <person name="Nieduszynski C.A."/>
            <person name="Spatafora J.W."/>
            <person name="Friedman N."/>
            <person name="Dalgaard J.Z."/>
            <person name="Baumann P."/>
            <person name="Niki H."/>
            <person name="Regev A."/>
            <person name="Nusbaum C."/>
        </authorList>
    </citation>
    <scope>REVISION OF GENE MODEL</scope>
</reference>
<reference key="3">
    <citation type="submission" date="2000-08" db="EMBL/GenBank/DDBJ databases">
        <authorList>
            <person name="Braun B.R."/>
        </authorList>
    </citation>
    <scope>NUCLEOTIDE SEQUENCE [MRNA] OF 38-598</scope>
    <source>
        <strain>972 / ATCC 24843</strain>
    </source>
</reference>
<reference key="4">
    <citation type="journal article" date="1999" name="Mol. Cell. Biol.">
        <title>Conservation of histone binding and transcriptional repressor functions in a Schizosaccharomyces pombe Tup1p homolog.</title>
        <authorList>
            <person name="Mukai Y."/>
            <person name="Matsuo E."/>
            <person name="Roth S.Y."/>
            <person name="Harashima S."/>
        </authorList>
    </citation>
    <scope>CHARACTERIZATION</scope>
</reference>
<protein>
    <recommendedName>
        <fullName>Transcriptional repressor tup12</fullName>
    </recommendedName>
</protein>
<evidence type="ECO:0000256" key="1">
    <source>
        <dbReference type="SAM" id="MobiDB-lite"/>
    </source>
</evidence>
<evidence type="ECO:0000305" key="2"/>
<name>TUP12_SCHPO</name>
<proteinExistence type="evidence at protein level"/>
<feature type="chain" id="PRO_0000051311" description="Transcriptional repressor tup12">
    <location>
        <begin position="1"/>
        <end position="598"/>
    </location>
</feature>
<feature type="repeat" description="WD 1">
    <location>
        <begin position="285"/>
        <end position="325"/>
    </location>
</feature>
<feature type="repeat" description="WD 2">
    <location>
        <begin position="332"/>
        <end position="371"/>
    </location>
</feature>
<feature type="repeat" description="WD 3">
    <location>
        <begin position="374"/>
        <end position="413"/>
    </location>
</feature>
<feature type="repeat" description="WD 4">
    <location>
        <begin position="415"/>
        <end position="454"/>
    </location>
</feature>
<feature type="repeat" description="WD 5">
    <location>
        <begin position="456"/>
        <end position="495"/>
    </location>
</feature>
<feature type="repeat" description="WD 6">
    <location>
        <begin position="510"/>
        <end position="549"/>
    </location>
</feature>
<feature type="repeat" description="WD 7">
    <location>
        <begin position="552"/>
        <end position="585"/>
    </location>
</feature>
<feature type="region of interest" description="Disordered" evidence="1">
    <location>
        <begin position="118"/>
        <end position="177"/>
    </location>
</feature>
<organism>
    <name type="scientific">Schizosaccharomyces pombe (strain 972 / ATCC 24843)</name>
    <name type="common">Fission yeast</name>
    <dbReference type="NCBI Taxonomy" id="284812"/>
    <lineage>
        <taxon>Eukaryota</taxon>
        <taxon>Fungi</taxon>
        <taxon>Dikarya</taxon>
        <taxon>Ascomycota</taxon>
        <taxon>Taphrinomycotina</taxon>
        <taxon>Schizosaccharomycetes</taxon>
        <taxon>Schizosaccharomycetales</taxon>
        <taxon>Schizosaccharomycetaceae</taxon>
        <taxon>Schizosaccharomyces</taxon>
    </lineage>
</organism>
<gene>
    <name type="primary">tup12</name>
    <name type="synonym">tup1</name>
    <name type="ORF">SPAC630.14c</name>
</gene>
<comment type="function">
    <text>Transcriptional repressor.</text>
</comment>
<comment type="similarity">
    <text evidence="2">Belongs to the WD repeat TUP1 family.</text>
</comment>
<sequence length="598" mass="65561">MLFLVISQTTSFMITVRQFTFTIFKFQFMATSNVSSRVNELLEAVKKEFEDICQKTKTVEAQKDDFEYKAMISAQINEMALMKQTVMDLEMQQSKVKDRYEEEITSLKAQLEARRKEIASGVVPQSSKTKHGRNSVSFGKYGNAGPFNSDNSSKPLILNNGSSGGTPKNLRSPAIDSDGTVLAPIQTSNVDLGSQYYSSPHVRPAVGATMAGSAMRTFPSNLPLGHPPPPSDSANSSVTPIAAPLVVNGKVSGNPPYPAEIIPTSNVPNREEKDWTVTSNVPNKEPPISVQLLHTLEHTSVICYVRFSADGKFLATGCNRAAMVFNVETGKLITLLQEESSKREGDLYVRSVAFSPDGKYLATGVEDQQIRIWDIAQKRVYRLLTGHEQEIYSLDFSKDGKTLVSGSGDRTVCLWDVEAGEQKLILHTDDGVTTVMFSPDGQFIAAGSLDKVIRIWTSSGTLVEQLHGHEESVYSVAFSPDGKYLVSGSLDNTIKLWELQCVSNVAPSMYKEGGICKQTFTGHKDFILSVTVSPDGKWIISGSKDRTIQFWSPDSPHSQLTLQGHNNSVISVAVSPNGHCFATGSGDLRARIWSYEDL</sequence>
<accession>Q9UUG8</accession>
<accession>O14432</accession>
<keyword id="KW-1185">Reference proteome</keyword>
<keyword id="KW-0677">Repeat</keyword>
<keyword id="KW-0678">Repressor</keyword>
<keyword id="KW-0804">Transcription</keyword>
<keyword id="KW-0805">Transcription regulation</keyword>
<keyword id="KW-0853">WD repeat</keyword>
<dbReference type="EMBL" id="CU329670">
    <property type="protein sequence ID" value="CAB52736.2"/>
    <property type="molecule type" value="Genomic_DNA"/>
</dbReference>
<dbReference type="EMBL" id="U92792">
    <property type="protein sequence ID" value="AAB81475.2"/>
    <property type="molecule type" value="mRNA"/>
</dbReference>
<dbReference type="PIR" id="T38992">
    <property type="entry name" value="T38992"/>
</dbReference>
<dbReference type="RefSeq" id="NP_592910.2">
    <property type="nucleotide sequence ID" value="NM_001018310.2"/>
</dbReference>
<dbReference type="SMR" id="Q9UUG8"/>
<dbReference type="BioGRID" id="279824">
    <property type="interactions" value="22"/>
</dbReference>
<dbReference type="FunCoup" id="Q9UUG8">
    <property type="interactions" value="160"/>
</dbReference>
<dbReference type="STRING" id="284812.Q9UUG8"/>
<dbReference type="iPTMnet" id="Q9UUG8"/>
<dbReference type="PaxDb" id="4896-SPAC630.14c.1"/>
<dbReference type="EnsemblFungi" id="SPAC630.14c.1">
    <property type="protein sequence ID" value="SPAC630.14c.1:pep"/>
    <property type="gene ID" value="SPAC630.14c"/>
</dbReference>
<dbReference type="GeneID" id="2543402"/>
<dbReference type="KEGG" id="spo:2543402"/>
<dbReference type="PomBase" id="SPAC630.14c">
    <property type="gene designation" value="tup12"/>
</dbReference>
<dbReference type="VEuPathDB" id="FungiDB:SPAC630.14c"/>
<dbReference type="eggNOG" id="KOG0266">
    <property type="taxonomic scope" value="Eukaryota"/>
</dbReference>
<dbReference type="HOGENOM" id="CLU_000288_57_23_1"/>
<dbReference type="InParanoid" id="Q9UUG8"/>
<dbReference type="OMA" id="GTTHMML"/>
<dbReference type="PRO" id="PR:Q9UUG8"/>
<dbReference type="Proteomes" id="UP000002485">
    <property type="component" value="Chromosome I"/>
</dbReference>
<dbReference type="GO" id="GO:0000785">
    <property type="term" value="C:chromatin"/>
    <property type="evidence" value="ECO:0000314"/>
    <property type="project" value="PomBase"/>
</dbReference>
<dbReference type="GO" id="GO:0160051">
    <property type="term" value="C:Cyc8(Ssn6)-Tup1 general repressor complex"/>
    <property type="evidence" value="ECO:0000269"/>
    <property type="project" value="PomBase"/>
</dbReference>
<dbReference type="GO" id="GO:0005737">
    <property type="term" value="C:cytoplasm"/>
    <property type="evidence" value="ECO:0007005"/>
    <property type="project" value="PomBase"/>
</dbReference>
<dbReference type="GO" id="GO:0005829">
    <property type="term" value="C:cytosol"/>
    <property type="evidence" value="ECO:0007005"/>
    <property type="project" value="PomBase"/>
</dbReference>
<dbReference type="GO" id="GO:0005634">
    <property type="term" value="C:nucleus"/>
    <property type="evidence" value="ECO:0007005"/>
    <property type="project" value="PomBase"/>
</dbReference>
<dbReference type="GO" id="GO:0042393">
    <property type="term" value="F:histone binding"/>
    <property type="evidence" value="ECO:0000314"/>
    <property type="project" value="PomBase"/>
</dbReference>
<dbReference type="GO" id="GO:0003714">
    <property type="term" value="F:transcription corepressor activity"/>
    <property type="evidence" value="ECO:0000315"/>
    <property type="project" value="PomBase"/>
</dbReference>
<dbReference type="GO" id="GO:0000122">
    <property type="term" value="P:negative regulation of transcription by RNA polymerase II"/>
    <property type="evidence" value="ECO:0000315"/>
    <property type="project" value="PomBase"/>
</dbReference>
<dbReference type="CDD" id="cd00200">
    <property type="entry name" value="WD40"/>
    <property type="match status" value="1"/>
</dbReference>
<dbReference type="FunFam" id="1.20.5.340:FF:000087">
    <property type="entry name" value="Transcriptional repressor tup12"/>
    <property type="match status" value="1"/>
</dbReference>
<dbReference type="Gene3D" id="1.20.5.340">
    <property type="match status" value="1"/>
</dbReference>
<dbReference type="Gene3D" id="2.130.10.10">
    <property type="entry name" value="YVTN repeat-like/Quinoprotein amine dehydrogenase"/>
    <property type="match status" value="1"/>
</dbReference>
<dbReference type="InterPro" id="IPR020472">
    <property type="entry name" value="G-protein_beta_WD-40_rep"/>
</dbReference>
<dbReference type="InterPro" id="IPR001632">
    <property type="entry name" value="Gprotein_B"/>
</dbReference>
<dbReference type="InterPro" id="IPR013890">
    <property type="entry name" value="Tscrpt_rep_Tup1_N"/>
</dbReference>
<dbReference type="InterPro" id="IPR015943">
    <property type="entry name" value="WD40/YVTN_repeat-like_dom_sf"/>
</dbReference>
<dbReference type="InterPro" id="IPR019775">
    <property type="entry name" value="WD40_repeat_CS"/>
</dbReference>
<dbReference type="InterPro" id="IPR036322">
    <property type="entry name" value="WD40_repeat_dom_sf"/>
</dbReference>
<dbReference type="InterPro" id="IPR001680">
    <property type="entry name" value="WD40_rpt"/>
</dbReference>
<dbReference type="PANTHER" id="PTHR19848:SF8">
    <property type="entry name" value="F-BOX AND WD REPEAT DOMAIN CONTAINING 7"/>
    <property type="match status" value="1"/>
</dbReference>
<dbReference type="PANTHER" id="PTHR19848">
    <property type="entry name" value="WD40 REPEAT PROTEIN"/>
    <property type="match status" value="1"/>
</dbReference>
<dbReference type="Pfam" id="PF08581">
    <property type="entry name" value="Tup_N"/>
    <property type="match status" value="1"/>
</dbReference>
<dbReference type="Pfam" id="PF00400">
    <property type="entry name" value="WD40"/>
    <property type="match status" value="7"/>
</dbReference>
<dbReference type="PRINTS" id="PR00319">
    <property type="entry name" value="GPROTEINB"/>
</dbReference>
<dbReference type="PRINTS" id="PR00320">
    <property type="entry name" value="GPROTEINBRPT"/>
</dbReference>
<dbReference type="SMART" id="SM00320">
    <property type="entry name" value="WD40"/>
    <property type="match status" value="7"/>
</dbReference>
<dbReference type="SUPFAM" id="SSF50978">
    <property type="entry name" value="WD40 repeat-like"/>
    <property type="match status" value="1"/>
</dbReference>
<dbReference type="PROSITE" id="PS00678">
    <property type="entry name" value="WD_REPEATS_1"/>
    <property type="match status" value="3"/>
</dbReference>
<dbReference type="PROSITE" id="PS50082">
    <property type="entry name" value="WD_REPEATS_2"/>
    <property type="match status" value="6"/>
</dbReference>
<dbReference type="PROSITE" id="PS50294">
    <property type="entry name" value="WD_REPEATS_REGION"/>
    <property type="match status" value="1"/>
</dbReference>